<reference key="1">
    <citation type="journal article" date="2006" name="J. Bacteriol.">
        <title>The genome of the obligately intracellular bacterium Ehrlichia canis reveals themes of complex membrane structure and immune evasion strategies.</title>
        <authorList>
            <person name="Mavromatis K."/>
            <person name="Doyle C.K."/>
            <person name="Lykidis A."/>
            <person name="Ivanova N."/>
            <person name="Francino M.P."/>
            <person name="Chain P."/>
            <person name="Shin M."/>
            <person name="Malfatti S."/>
            <person name="Larimer F."/>
            <person name="Copeland A."/>
            <person name="Detter J.C."/>
            <person name="Land M."/>
            <person name="Richardson P.M."/>
            <person name="Yu X.J."/>
            <person name="Walker D.H."/>
            <person name="McBride J.W."/>
            <person name="Kyrpides N.C."/>
        </authorList>
    </citation>
    <scope>NUCLEOTIDE SEQUENCE [LARGE SCALE GENOMIC DNA]</scope>
    <source>
        <strain>Jake</strain>
    </source>
</reference>
<accession>Q3YSE4</accession>
<protein>
    <recommendedName>
        <fullName evidence="1">4-diphosphocytidyl-2-C-methyl-D-erythritol kinase</fullName>
        <shortName evidence="1">CMK</shortName>
        <ecNumber evidence="1">2.7.1.148</ecNumber>
    </recommendedName>
    <alternativeName>
        <fullName evidence="1">4-(cytidine-5'-diphospho)-2-C-methyl-D-erythritol kinase</fullName>
    </alternativeName>
</protein>
<keyword id="KW-0067">ATP-binding</keyword>
<keyword id="KW-0414">Isoprene biosynthesis</keyword>
<keyword id="KW-0418">Kinase</keyword>
<keyword id="KW-0547">Nucleotide-binding</keyword>
<keyword id="KW-0808">Transferase</keyword>
<feature type="chain" id="PRO_0000235089" description="4-diphosphocytidyl-2-C-methyl-D-erythritol kinase">
    <location>
        <begin position="1"/>
        <end position="282"/>
    </location>
</feature>
<feature type="active site" evidence="1">
    <location>
        <position position="11"/>
    </location>
</feature>
<feature type="active site" evidence="1">
    <location>
        <position position="133"/>
    </location>
</feature>
<feature type="binding site" evidence="1">
    <location>
        <begin position="93"/>
        <end position="103"/>
    </location>
    <ligand>
        <name>ATP</name>
        <dbReference type="ChEBI" id="CHEBI:30616"/>
    </ligand>
</feature>
<comment type="function">
    <text evidence="1">Catalyzes the phosphorylation of the position 2 hydroxy group of 4-diphosphocytidyl-2C-methyl-D-erythritol.</text>
</comment>
<comment type="catalytic activity">
    <reaction evidence="1">
        <text>4-CDP-2-C-methyl-D-erythritol + ATP = 4-CDP-2-C-methyl-D-erythritol 2-phosphate + ADP + H(+)</text>
        <dbReference type="Rhea" id="RHEA:18437"/>
        <dbReference type="ChEBI" id="CHEBI:15378"/>
        <dbReference type="ChEBI" id="CHEBI:30616"/>
        <dbReference type="ChEBI" id="CHEBI:57823"/>
        <dbReference type="ChEBI" id="CHEBI:57919"/>
        <dbReference type="ChEBI" id="CHEBI:456216"/>
        <dbReference type="EC" id="2.7.1.148"/>
    </reaction>
</comment>
<comment type="pathway">
    <text evidence="1">Isoprenoid biosynthesis; isopentenyl diphosphate biosynthesis via DXP pathway; isopentenyl diphosphate from 1-deoxy-D-xylulose 5-phosphate: step 3/6.</text>
</comment>
<comment type="similarity">
    <text evidence="1">Belongs to the GHMP kinase family. IspE subfamily.</text>
</comment>
<name>ISPE_EHRCJ</name>
<gene>
    <name evidence="1" type="primary">ispE</name>
    <name type="ordered locus">Ecaj_0317</name>
</gene>
<evidence type="ECO:0000255" key="1">
    <source>
        <dbReference type="HAMAP-Rule" id="MF_00061"/>
    </source>
</evidence>
<organism>
    <name type="scientific">Ehrlichia canis (strain Jake)</name>
    <dbReference type="NCBI Taxonomy" id="269484"/>
    <lineage>
        <taxon>Bacteria</taxon>
        <taxon>Pseudomonadati</taxon>
        <taxon>Pseudomonadota</taxon>
        <taxon>Alphaproteobacteria</taxon>
        <taxon>Rickettsiales</taxon>
        <taxon>Anaplasmataceae</taxon>
        <taxon>Ehrlichia</taxon>
    </lineage>
</organism>
<dbReference type="EC" id="2.7.1.148" evidence="1"/>
<dbReference type="EMBL" id="CP000107">
    <property type="protein sequence ID" value="AAZ68361.1"/>
    <property type="molecule type" value="Genomic_DNA"/>
</dbReference>
<dbReference type="RefSeq" id="WP_011304439.1">
    <property type="nucleotide sequence ID" value="NC_007354.1"/>
</dbReference>
<dbReference type="SMR" id="Q3YSE4"/>
<dbReference type="FunCoup" id="Q3YSE4">
    <property type="interactions" value="158"/>
</dbReference>
<dbReference type="STRING" id="269484.Ecaj_0317"/>
<dbReference type="KEGG" id="ecn:Ecaj_0317"/>
<dbReference type="eggNOG" id="COG1947">
    <property type="taxonomic scope" value="Bacteria"/>
</dbReference>
<dbReference type="HOGENOM" id="CLU_053057_1_0_5"/>
<dbReference type="InParanoid" id="Q3YSE4"/>
<dbReference type="UniPathway" id="UPA00056">
    <property type="reaction ID" value="UER00094"/>
</dbReference>
<dbReference type="Proteomes" id="UP000000435">
    <property type="component" value="Chromosome"/>
</dbReference>
<dbReference type="GO" id="GO:0050515">
    <property type="term" value="F:4-(cytidine 5'-diphospho)-2-C-methyl-D-erythritol kinase activity"/>
    <property type="evidence" value="ECO:0007669"/>
    <property type="project" value="UniProtKB-UniRule"/>
</dbReference>
<dbReference type="GO" id="GO:0005524">
    <property type="term" value="F:ATP binding"/>
    <property type="evidence" value="ECO:0007669"/>
    <property type="project" value="UniProtKB-UniRule"/>
</dbReference>
<dbReference type="GO" id="GO:0019288">
    <property type="term" value="P:isopentenyl diphosphate biosynthetic process, methylerythritol 4-phosphate pathway"/>
    <property type="evidence" value="ECO:0007669"/>
    <property type="project" value="UniProtKB-UniRule"/>
</dbReference>
<dbReference type="GO" id="GO:0016114">
    <property type="term" value="P:terpenoid biosynthetic process"/>
    <property type="evidence" value="ECO:0007669"/>
    <property type="project" value="InterPro"/>
</dbReference>
<dbReference type="Gene3D" id="3.30.230.10">
    <property type="match status" value="1"/>
</dbReference>
<dbReference type="Gene3D" id="3.30.70.890">
    <property type="entry name" value="GHMP kinase, C-terminal domain"/>
    <property type="match status" value="1"/>
</dbReference>
<dbReference type="HAMAP" id="MF_00061">
    <property type="entry name" value="IspE"/>
    <property type="match status" value="1"/>
</dbReference>
<dbReference type="InterPro" id="IPR013750">
    <property type="entry name" value="GHMP_kinase_C_dom"/>
</dbReference>
<dbReference type="InterPro" id="IPR036554">
    <property type="entry name" value="GHMP_kinase_C_sf"/>
</dbReference>
<dbReference type="InterPro" id="IPR006204">
    <property type="entry name" value="GHMP_kinase_N_dom"/>
</dbReference>
<dbReference type="InterPro" id="IPR004424">
    <property type="entry name" value="IspE"/>
</dbReference>
<dbReference type="InterPro" id="IPR020568">
    <property type="entry name" value="Ribosomal_Su5_D2-typ_SF"/>
</dbReference>
<dbReference type="InterPro" id="IPR014721">
    <property type="entry name" value="Ribsml_uS5_D2-typ_fold_subgr"/>
</dbReference>
<dbReference type="NCBIfam" id="TIGR00154">
    <property type="entry name" value="ispE"/>
    <property type="match status" value="1"/>
</dbReference>
<dbReference type="NCBIfam" id="NF011202">
    <property type="entry name" value="PRK14608.1"/>
    <property type="match status" value="1"/>
</dbReference>
<dbReference type="PANTHER" id="PTHR43527">
    <property type="entry name" value="4-DIPHOSPHOCYTIDYL-2-C-METHYL-D-ERYTHRITOL KINASE, CHLOROPLASTIC"/>
    <property type="match status" value="1"/>
</dbReference>
<dbReference type="PANTHER" id="PTHR43527:SF2">
    <property type="entry name" value="4-DIPHOSPHOCYTIDYL-2-C-METHYL-D-ERYTHRITOL KINASE, CHLOROPLASTIC"/>
    <property type="match status" value="1"/>
</dbReference>
<dbReference type="Pfam" id="PF08544">
    <property type="entry name" value="GHMP_kinases_C"/>
    <property type="match status" value="1"/>
</dbReference>
<dbReference type="Pfam" id="PF00288">
    <property type="entry name" value="GHMP_kinases_N"/>
    <property type="match status" value="1"/>
</dbReference>
<dbReference type="PIRSF" id="PIRSF010376">
    <property type="entry name" value="IspE"/>
    <property type="match status" value="1"/>
</dbReference>
<dbReference type="SUPFAM" id="SSF55060">
    <property type="entry name" value="GHMP Kinase, C-terminal domain"/>
    <property type="match status" value="1"/>
</dbReference>
<dbReference type="SUPFAM" id="SSF54211">
    <property type="entry name" value="Ribosomal protein S5 domain 2-like"/>
    <property type="match status" value="1"/>
</dbReference>
<sequence length="282" mass="31632">MSIFLVKAPAKVNLFLHITGKRIDQHHYLESLFVFVNVYDLLEVNIDGRKRGVYFSNFKISKYNNTVYKAIELLLKHSSVRPNISVNVIKNILVSAGLAGGSADAAAIIRLLGNMWNIDCKLLQDLALKVGSDVPACLESKTLFAKGVGEDILLLPDLLLPRYIILVAPRGKSLSTAKVFNHYKCDNFSASICDKLPVKQDDWMELIYNSKNDLLDVALNFVPEIEEILFVLKKLKNVFIARMTGSGATCFALFHELSHAENAAKHLRMTRPDWVIFNAKIL</sequence>
<proteinExistence type="inferred from homology"/>